<name>PP294_ARATH</name>
<comment type="subcellular location">
    <subcellularLocation>
        <location evidence="2">Mitochondrion</location>
    </subcellularLocation>
</comment>
<comment type="similarity">
    <text evidence="2">Belongs to the PPR family. P subfamily.</text>
</comment>
<comment type="online information" name="Pentatricopeptide repeat proteins">
    <link uri="https://ppr.plantenergy.uwa.edu.au"/>
</comment>
<accession>Q3EAF8</accession>
<accession>Q9LZN6</accession>
<reference key="1">
    <citation type="journal article" date="2000" name="Nature">
        <title>Sequence and analysis of chromosome 3 of the plant Arabidopsis thaliana.</title>
        <authorList>
            <person name="Salanoubat M."/>
            <person name="Lemcke K."/>
            <person name="Rieger M."/>
            <person name="Ansorge W."/>
            <person name="Unseld M."/>
            <person name="Fartmann B."/>
            <person name="Valle G."/>
            <person name="Bloecker H."/>
            <person name="Perez-Alonso M."/>
            <person name="Obermaier B."/>
            <person name="Delseny M."/>
            <person name="Boutry M."/>
            <person name="Grivell L.A."/>
            <person name="Mache R."/>
            <person name="Puigdomenech P."/>
            <person name="De Simone V."/>
            <person name="Choisne N."/>
            <person name="Artiguenave F."/>
            <person name="Robert C."/>
            <person name="Brottier P."/>
            <person name="Wincker P."/>
            <person name="Cattolico L."/>
            <person name="Weissenbach J."/>
            <person name="Saurin W."/>
            <person name="Quetier F."/>
            <person name="Schaefer M."/>
            <person name="Mueller-Auer S."/>
            <person name="Gabel C."/>
            <person name="Fuchs M."/>
            <person name="Benes V."/>
            <person name="Wurmbach E."/>
            <person name="Drzonek H."/>
            <person name="Erfle H."/>
            <person name="Jordan N."/>
            <person name="Bangert S."/>
            <person name="Wiedelmann R."/>
            <person name="Kranz H."/>
            <person name="Voss H."/>
            <person name="Holland R."/>
            <person name="Brandt P."/>
            <person name="Nyakatura G."/>
            <person name="Vezzi A."/>
            <person name="D'Angelo M."/>
            <person name="Pallavicini A."/>
            <person name="Toppo S."/>
            <person name="Simionati B."/>
            <person name="Conrad A."/>
            <person name="Hornischer K."/>
            <person name="Kauer G."/>
            <person name="Loehnert T.-H."/>
            <person name="Nordsiek G."/>
            <person name="Reichelt J."/>
            <person name="Scharfe M."/>
            <person name="Schoen O."/>
            <person name="Bargues M."/>
            <person name="Terol J."/>
            <person name="Climent J."/>
            <person name="Navarro P."/>
            <person name="Collado C."/>
            <person name="Perez-Perez A."/>
            <person name="Ottenwaelder B."/>
            <person name="Duchemin D."/>
            <person name="Cooke R."/>
            <person name="Laudie M."/>
            <person name="Berger-Llauro C."/>
            <person name="Purnelle B."/>
            <person name="Masuy D."/>
            <person name="de Haan M."/>
            <person name="Maarse A.C."/>
            <person name="Alcaraz J.-P."/>
            <person name="Cottet A."/>
            <person name="Casacuberta E."/>
            <person name="Monfort A."/>
            <person name="Argiriou A."/>
            <person name="Flores M."/>
            <person name="Liguori R."/>
            <person name="Vitale D."/>
            <person name="Mannhaupt G."/>
            <person name="Haase D."/>
            <person name="Schoof H."/>
            <person name="Rudd S."/>
            <person name="Zaccaria P."/>
            <person name="Mewes H.-W."/>
            <person name="Mayer K.F.X."/>
            <person name="Kaul S."/>
            <person name="Town C.D."/>
            <person name="Koo H.L."/>
            <person name="Tallon L.J."/>
            <person name="Jenkins J."/>
            <person name="Rooney T."/>
            <person name="Rizzo M."/>
            <person name="Walts A."/>
            <person name="Utterback T."/>
            <person name="Fujii C.Y."/>
            <person name="Shea T.P."/>
            <person name="Creasy T.H."/>
            <person name="Haas B."/>
            <person name="Maiti R."/>
            <person name="Wu D."/>
            <person name="Peterson J."/>
            <person name="Van Aken S."/>
            <person name="Pai G."/>
            <person name="Militscher J."/>
            <person name="Sellers P."/>
            <person name="Gill J.E."/>
            <person name="Feldblyum T.V."/>
            <person name="Preuss D."/>
            <person name="Lin X."/>
            <person name="Nierman W.C."/>
            <person name="Salzberg S.L."/>
            <person name="White O."/>
            <person name="Venter J.C."/>
            <person name="Fraser C.M."/>
            <person name="Kaneko T."/>
            <person name="Nakamura Y."/>
            <person name="Sato S."/>
            <person name="Kato T."/>
            <person name="Asamizu E."/>
            <person name="Sasamoto S."/>
            <person name="Kimura T."/>
            <person name="Idesawa K."/>
            <person name="Kawashima K."/>
            <person name="Kishida Y."/>
            <person name="Kiyokawa C."/>
            <person name="Kohara M."/>
            <person name="Matsumoto M."/>
            <person name="Matsuno A."/>
            <person name="Muraki A."/>
            <person name="Nakayama S."/>
            <person name="Nakazaki N."/>
            <person name="Shinpo S."/>
            <person name="Takeuchi C."/>
            <person name="Wada T."/>
            <person name="Watanabe A."/>
            <person name="Yamada M."/>
            <person name="Yasuda M."/>
            <person name="Tabata S."/>
        </authorList>
    </citation>
    <scope>NUCLEOTIDE SEQUENCE [LARGE SCALE GENOMIC DNA] OF 292-599</scope>
    <source>
        <strain>cv. Columbia</strain>
    </source>
</reference>
<reference key="2">
    <citation type="journal article" date="2017" name="Plant J.">
        <title>Araport11: a complete reannotation of the Arabidopsis thaliana reference genome.</title>
        <authorList>
            <person name="Cheng C.Y."/>
            <person name="Krishnakumar V."/>
            <person name="Chan A.P."/>
            <person name="Thibaud-Nissen F."/>
            <person name="Schobel S."/>
            <person name="Town C.D."/>
        </authorList>
    </citation>
    <scope>GENOME REANNOTATION</scope>
    <source>
        <strain>cv. Columbia</strain>
    </source>
</reference>
<reference key="3">
    <citation type="journal article" date="2004" name="Plant Cell">
        <title>Genome-wide analysis of Arabidopsis pentatricopeptide repeat proteins reveals their essential role in organelle biogenesis.</title>
        <authorList>
            <person name="Lurin C."/>
            <person name="Andres C."/>
            <person name="Aubourg S."/>
            <person name="Bellaoui M."/>
            <person name="Bitton F."/>
            <person name="Bruyere C."/>
            <person name="Caboche M."/>
            <person name="Debast C."/>
            <person name="Gualberto J."/>
            <person name="Hoffmann B."/>
            <person name="Lecharny A."/>
            <person name="Le Ret M."/>
            <person name="Martin-Magniette M.-L."/>
            <person name="Mireau H."/>
            <person name="Peeters N."/>
            <person name="Renou J.-P."/>
            <person name="Szurek B."/>
            <person name="Taconnat L."/>
            <person name="Small I."/>
        </authorList>
    </citation>
    <scope>GENE FAMILY</scope>
</reference>
<keyword id="KW-0496">Mitochondrion</keyword>
<keyword id="KW-1185">Reference proteome</keyword>
<keyword id="KW-0677">Repeat</keyword>
<keyword id="KW-0809">Transit peptide</keyword>
<evidence type="ECO:0000255" key="1"/>
<evidence type="ECO:0000305" key="2"/>
<sequence>MAAAPWLYLSRRRSSTQTSLRRFLICSSSFDADEFISSQSRVIGGRGEEEVRFSGALFSRMIHSSTYHPYRQIPLPHSSVQLLDASLGCRGFSSGSSNVSDGCDEEVESECDNDEETGVSCVESSTNPEEVERVCKVIDELFALDRNMEAVLDEMKLDLSHDLIVEVLERFRHARKPAFRFFCWAAERQGFAHASRTYNSMMSILAKTRQFETMVSVLEEMGTKGLLTMETFTIAMKAFAAAKERKKAVGIFELMKKYKFKIGVETINCLLDSLGRAKLGKEAQVLFDKLKERFTPNMMTYTVLLNGWCRVRNLIEAARIWNDMIDHGLKPDIVAHNVMLEGLLRSMKKSDAIKLFHVMKSKGPCPNVRSYTIMIRDFCKQSSMETAIEYFDDMVDSGLQPDAAVYTCLITGFGTQKKLDTVYELLKEMQEKGHPPDGKTYNALIKLMANQKMPEHGTRIYNKMIQNEIEPSIHTFNMIMKSYFVARNYEMGRAVWDEMIKKGICPDDNSYTVLIRGLISEGKSREACRYLEEMLDKGMKTPLIDYNKFAADFHRGGQPEIFEELAQRAKFSGKFAAAEIFARWAQMTRRRCKQRFMED</sequence>
<gene>
    <name type="ordered locus">At3g62540</name>
    <name type="ORF">T12C14_240</name>
</gene>
<dbReference type="EMBL" id="AL162507">
    <property type="protein sequence ID" value="CAB82968.1"/>
    <property type="molecule type" value="Genomic_DNA"/>
</dbReference>
<dbReference type="EMBL" id="CP002686">
    <property type="protein sequence ID" value="AEE80362.1"/>
    <property type="molecule type" value="Genomic_DNA"/>
</dbReference>
<dbReference type="PIR" id="T48046">
    <property type="entry name" value="T48046"/>
</dbReference>
<dbReference type="RefSeq" id="NP_191813.1">
    <property type="nucleotide sequence ID" value="NM_116119.3"/>
</dbReference>
<dbReference type="SMR" id="Q3EAF8"/>
<dbReference type="iPTMnet" id="Q3EAF8"/>
<dbReference type="PaxDb" id="3702-AT3G62540.1"/>
<dbReference type="ProteomicsDB" id="249201"/>
<dbReference type="EnsemblPlants" id="AT3G62540.1">
    <property type="protein sequence ID" value="AT3G62540.1"/>
    <property type="gene ID" value="AT3G62540"/>
</dbReference>
<dbReference type="GeneID" id="825428"/>
<dbReference type="Gramene" id="AT3G62540.1">
    <property type="protein sequence ID" value="AT3G62540.1"/>
    <property type="gene ID" value="AT3G62540"/>
</dbReference>
<dbReference type="KEGG" id="ath:AT3G62540"/>
<dbReference type="Araport" id="AT3G62540"/>
<dbReference type="TAIR" id="AT3G62540"/>
<dbReference type="eggNOG" id="KOG4197">
    <property type="taxonomic scope" value="Eukaryota"/>
</dbReference>
<dbReference type="HOGENOM" id="CLU_002706_49_20_1"/>
<dbReference type="InParanoid" id="Q3EAF8"/>
<dbReference type="OMA" id="SGCKSNW"/>
<dbReference type="PhylomeDB" id="Q3EAF8"/>
<dbReference type="PRO" id="PR:Q3EAF8"/>
<dbReference type="Proteomes" id="UP000006548">
    <property type="component" value="Chromosome 3"/>
</dbReference>
<dbReference type="ExpressionAtlas" id="Q3EAF8">
    <property type="expression patterns" value="baseline"/>
</dbReference>
<dbReference type="GO" id="GO:0005739">
    <property type="term" value="C:mitochondrion"/>
    <property type="evidence" value="ECO:0007669"/>
    <property type="project" value="UniProtKB-SubCell"/>
</dbReference>
<dbReference type="Gene3D" id="1.25.40.10">
    <property type="entry name" value="Tetratricopeptide repeat domain"/>
    <property type="match status" value="3"/>
</dbReference>
<dbReference type="InterPro" id="IPR002885">
    <property type="entry name" value="Pentatricopeptide_rpt"/>
</dbReference>
<dbReference type="InterPro" id="IPR033443">
    <property type="entry name" value="PROP1-like_PPR_dom"/>
</dbReference>
<dbReference type="InterPro" id="IPR011990">
    <property type="entry name" value="TPR-like_helical_dom_sf"/>
</dbReference>
<dbReference type="NCBIfam" id="TIGR00756">
    <property type="entry name" value="PPR"/>
    <property type="match status" value="9"/>
</dbReference>
<dbReference type="PANTHER" id="PTHR47938:SF35">
    <property type="entry name" value="PENTATRICOPEPTIDE REPEAT-CONTAINING PROTEIN 4, MITOCHONDRIAL-RELATED"/>
    <property type="match status" value="1"/>
</dbReference>
<dbReference type="PANTHER" id="PTHR47938">
    <property type="entry name" value="RESPIRATORY COMPLEX I CHAPERONE (CIA84), PUTATIVE (AFU_ORTHOLOGUE AFUA_2G06020)-RELATED"/>
    <property type="match status" value="1"/>
</dbReference>
<dbReference type="Pfam" id="PF01535">
    <property type="entry name" value="PPR"/>
    <property type="match status" value="3"/>
</dbReference>
<dbReference type="Pfam" id="PF13041">
    <property type="entry name" value="PPR_2"/>
    <property type="match status" value="1"/>
</dbReference>
<dbReference type="Pfam" id="PF17177">
    <property type="entry name" value="PPR_long"/>
    <property type="match status" value="1"/>
</dbReference>
<dbReference type="SUPFAM" id="SSF81901">
    <property type="entry name" value="HCP-like"/>
    <property type="match status" value="1"/>
</dbReference>
<dbReference type="PROSITE" id="PS51375">
    <property type="entry name" value="PPR"/>
    <property type="match status" value="10"/>
</dbReference>
<proteinExistence type="evidence at transcript level"/>
<organism>
    <name type="scientific">Arabidopsis thaliana</name>
    <name type="common">Mouse-ear cress</name>
    <dbReference type="NCBI Taxonomy" id="3702"/>
    <lineage>
        <taxon>Eukaryota</taxon>
        <taxon>Viridiplantae</taxon>
        <taxon>Streptophyta</taxon>
        <taxon>Embryophyta</taxon>
        <taxon>Tracheophyta</taxon>
        <taxon>Spermatophyta</taxon>
        <taxon>Magnoliopsida</taxon>
        <taxon>eudicotyledons</taxon>
        <taxon>Gunneridae</taxon>
        <taxon>Pentapetalae</taxon>
        <taxon>rosids</taxon>
        <taxon>malvids</taxon>
        <taxon>Brassicales</taxon>
        <taxon>Brassicaceae</taxon>
        <taxon>Camelineae</taxon>
        <taxon>Arabidopsis</taxon>
    </lineage>
</organism>
<protein>
    <recommendedName>
        <fullName>Pentatricopeptide repeat-containing protein At3g62540, mitochondrial</fullName>
    </recommendedName>
</protein>
<feature type="transit peptide" description="Mitochondrion" evidence="1">
    <location>
        <begin position="1"/>
        <end position="99"/>
    </location>
</feature>
<feature type="chain" id="PRO_0000356153" description="Pentatricopeptide repeat-containing protein At3g62540, mitochondrial">
    <location>
        <begin position="100"/>
        <end position="599"/>
    </location>
</feature>
<feature type="repeat" description="PPR 1">
    <location>
        <begin position="194"/>
        <end position="228"/>
    </location>
</feature>
<feature type="repeat" description="PPR 2">
    <location>
        <begin position="230"/>
        <end position="262"/>
    </location>
</feature>
<feature type="repeat" description="PPR 3">
    <location>
        <begin position="263"/>
        <end position="293"/>
    </location>
</feature>
<feature type="repeat" description="PPR 4">
    <location>
        <begin position="297"/>
        <end position="331"/>
    </location>
</feature>
<feature type="repeat" description="PPR 5">
    <location>
        <begin position="332"/>
        <end position="366"/>
    </location>
</feature>
<feature type="repeat" description="PPR 6">
    <location>
        <begin position="367"/>
        <end position="401"/>
    </location>
</feature>
<feature type="repeat" description="PPR 7">
    <location>
        <begin position="402"/>
        <end position="436"/>
    </location>
</feature>
<feature type="repeat" description="PPR 8">
    <location>
        <begin position="437"/>
        <end position="471"/>
    </location>
</feature>
<feature type="repeat" description="PPR 9">
    <location>
        <begin position="472"/>
        <end position="506"/>
    </location>
</feature>
<feature type="repeat" description="PPR 10">
    <location>
        <begin position="507"/>
        <end position="541"/>
    </location>
</feature>